<comment type="function">
    <text evidence="1">Located at the top of the head of the 30S subunit, it contacts several helices of the 16S rRNA. In the 70S ribosome it contacts the 23S rRNA (bridge B1a) and protein L5 of the 50S subunit (bridge B1b), connecting the 2 subunits; these bridges are implicated in subunit movement. Contacts the tRNAs in the A and P-sites.</text>
</comment>
<comment type="subunit">
    <text evidence="1">Part of the 30S ribosomal subunit. Forms a loose heterodimer with protein S19. Forms two bridges to the 50S subunit in the 70S ribosome.</text>
</comment>
<comment type="similarity">
    <text evidence="1">Belongs to the universal ribosomal protein uS13 family.</text>
</comment>
<gene>
    <name evidence="1" type="primary">rpsM</name>
    <name type="ordered locus">ACICU_03256</name>
</gene>
<evidence type="ECO:0000255" key="1">
    <source>
        <dbReference type="HAMAP-Rule" id="MF_01315"/>
    </source>
</evidence>
<evidence type="ECO:0000256" key="2">
    <source>
        <dbReference type="SAM" id="MobiDB-lite"/>
    </source>
</evidence>
<evidence type="ECO:0000305" key="3"/>
<proteinExistence type="inferred from homology"/>
<organism>
    <name type="scientific">Acinetobacter baumannii (strain ACICU)</name>
    <dbReference type="NCBI Taxonomy" id="405416"/>
    <lineage>
        <taxon>Bacteria</taxon>
        <taxon>Pseudomonadati</taxon>
        <taxon>Pseudomonadota</taxon>
        <taxon>Gammaproteobacteria</taxon>
        <taxon>Moraxellales</taxon>
        <taxon>Moraxellaceae</taxon>
        <taxon>Acinetobacter</taxon>
        <taxon>Acinetobacter calcoaceticus/baumannii complex</taxon>
    </lineage>
</organism>
<sequence length="118" mass="13267">MARIAGVNIPDNKHAVISLTYIFGIGRHTAKNILAAVGITETTKIRELDDAQLDAIRAEVAKVPTEGDLRREISMNIKRLMDLGCYRGLRHRRSLPVRGQRTKTNARTRKGPRKPIKK</sequence>
<keyword id="KW-0687">Ribonucleoprotein</keyword>
<keyword id="KW-0689">Ribosomal protein</keyword>
<keyword id="KW-0694">RNA-binding</keyword>
<keyword id="KW-0699">rRNA-binding</keyword>
<keyword id="KW-0820">tRNA-binding</keyword>
<reference key="1">
    <citation type="journal article" date="2008" name="Antimicrob. Agents Chemother.">
        <title>Whole-genome pyrosequencing of an epidemic multidrug-resistant Acinetobacter baumannii strain belonging to the European clone II group.</title>
        <authorList>
            <person name="Iacono M."/>
            <person name="Villa L."/>
            <person name="Fortini D."/>
            <person name="Bordoni R."/>
            <person name="Imperi F."/>
            <person name="Bonnal R.J."/>
            <person name="Sicheritz-Ponten T."/>
            <person name="De Bellis G."/>
            <person name="Visca P."/>
            <person name="Cassone A."/>
            <person name="Carattoli A."/>
        </authorList>
    </citation>
    <scope>NUCLEOTIDE SEQUENCE [LARGE SCALE GENOMIC DNA]</scope>
    <source>
        <strain>ACICU</strain>
    </source>
</reference>
<accession>B2HZ86</accession>
<protein>
    <recommendedName>
        <fullName evidence="1">Small ribosomal subunit protein uS13</fullName>
    </recommendedName>
    <alternativeName>
        <fullName evidence="3">30S ribosomal protein S13</fullName>
    </alternativeName>
</protein>
<name>RS13_ACIBC</name>
<feature type="chain" id="PRO_1000141205" description="Small ribosomal subunit protein uS13">
    <location>
        <begin position="1"/>
        <end position="118"/>
    </location>
</feature>
<feature type="region of interest" description="Disordered" evidence="2">
    <location>
        <begin position="92"/>
        <end position="118"/>
    </location>
</feature>
<dbReference type="EMBL" id="CP000863">
    <property type="protein sequence ID" value="ACC58568.1"/>
    <property type="molecule type" value="Genomic_DNA"/>
</dbReference>
<dbReference type="RefSeq" id="WP_000090815.1">
    <property type="nucleotide sequence ID" value="NZ_CP031380.1"/>
</dbReference>
<dbReference type="SMR" id="B2HZ86"/>
<dbReference type="GeneID" id="92895295"/>
<dbReference type="KEGG" id="abc:ACICU_03256"/>
<dbReference type="HOGENOM" id="CLU_103849_1_2_6"/>
<dbReference type="Proteomes" id="UP000008839">
    <property type="component" value="Chromosome"/>
</dbReference>
<dbReference type="GO" id="GO:0005829">
    <property type="term" value="C:cytosol"/>
    <property type="evidence" value="ECO:0007669"/>
    <property type="project" value="TreeGrafter"/>
</dbReference>
<dbReference type="GO" id="GO:0015935">
    <property type="term" value="C:small ribosomal subunit"/>
    <property type="evidence" value="ECO:0007669"/>
    <property type="project" value="TreeGrafter"/>
</dbReference>
<dbReference type="GO" id="GO:0019843">
    <property type="term" value="F:rRNA binding"/>
    <property type="evidence" value="ECO:0007669"/>
    <property type="project" value="UniProtKB-UniRule"/>
</dbReference>
<dbReference type="GO" id="GO:0003735">
    <property type="term" value="F:structural constituent of ribosome"/>
    <property type="evidence" value="ECO:0007669"/>
    <property type="project" value="InterPro"/>
</dbReference>
<dbReference type="GO" id="GO:0000049">
    <property type="term" value="F:tRNA binding"/>
    <property type="evidence" value="ECO:0007669"/>
    <property type="project" value="UniProtKB-UniRule"/>
</dbReference>
<dbReference type="GO" id="GO:0006412">
    <property type="term" value="P:translation"/>
    <property type="evidence" value="ECO:0007669"/>
    <property type="project" value="UniProtKB-UniRule"/>
</dbReference>
<dbReference type="FunFam" id="1.10.8.50:FF:000001">
    <property type="entry name" value="30S ribosomal protein S13"/>
    <property type="match status" value="1"/>
</dbReference>
<dbReference type="FunFam" id="4.10.910.10:FF:000001">
    <property type="entry name" value="30S ribosomal protein S13"/>
    <property type="match status" value="1"/>
</dbReference>
<dbReference type="Gene3D" id="1.10.8.50">
    <property type="match status" value="1"/>
</dbReference>
<dbReference type="Gene3D" id="4.10.910.10">
    <property type="entry name" value="30s ribosomal protein s13, domain 2"/>
    <property type="match status" value="1"/>
</dbReference>
<dbReference type="HAMAP" id="MF_01315">
    <property type="entry name" value="Ribosomal_uS13"/>
    <property type="match status" value="1"/>
</dbReference>
<dbReference type="InterPro" id="IPR027437">
    <property type="entry name" value="Rbsml_uS13_C"/>
</dbReference>
<dbReference type="InterPro" id="IPR001892">
    <property type="entry name" value="Ribosomal_uS13"/>
</dbReference>
<dbReference type="InterPro" id="IPR010979">
    <property type="entry name" value="Ribosomal_uS13-like_H2TH"/>
</dbReference>
<dbReference type="InterPro" id="IPR019980">
    <property type="entry name" value="Ribosomal_uS13_bac-type"/>
</dbReference>
<dbReference type="InterPro" id="IPR018269">
    <property type="entry name" value="Ribosomal_uS13_CS"/>
</dbReference>
<dbReference type="NCBIfam" id="TIGR03631">
    <property type="entry name" value="uS13_bact"/>
    <property type="match status" value="1"/>
</dbReference>
<dbReference type="PANTHER" id="PTHR10871">
    <property type="entry name" value="30S RIBOSOMAL PROTEIN S13/40S RIBOSOMAL PROTEIN S18"/>
    <property type="match status" value="1"/>
</dbReference>
<dbReference type="PANTHER" id="PTHR10871:SF1">
    <property type="entry name" value="SMALL RIBOSOMAL SUBUNIT PROTEIN US13M"/>
    <property type="match status" value="1"/>
</dbReference>
<dbReference type="Pfam" id="PF00416">
    <property type="entry name" value="Ribosomal_S13"/>
    <property type="match status" value="2"/>
</dbReference>
<dbReference type="PIRSF" id="PIRSF002134">
    <property type="entry name" value="Ribosomal_S13"/>
    <property type="match status" value="1"/>
</dbReference>
<dbReference type="SUPFAM" id="SSF46946">
    <property type="entry name" value="S13-like H2TH domain"/>
    <property type="match status" value="1"/>
</dbReference>
<dbReference type="PROSITE" id="PS00646">
    <property type="entry name" value="RIBOSOMAL_S13_1"/>
    <property type="match status" value="1"/>
</dbReference>
<dbReference type="PROSITE" id="PS50159">
    <property type="entry name" value="RIBOSOMAL_S13_2"/>
    <property type="match status" value="1"/>
</dbReference>